<feature type="chain" id="PRO_1000123669" description="3-hydroxyacyl-[acyl-carrier-protein] dehydratase FabZ">
    <location>
        <begin position="1"/>
        <end position="140"/>
    </location>
</feature>
<feature type="active site" evidence="1">
    <location>
        <position position="47"/>
    </location>
</feature>
<accession>B5E1N7</accession>
<organism>
    <name type="scientific">Streptococcus pneumoniae serotype 19F (strain G54)</name>
    <dbReference type="NCBI Taxonomy" id="512566"/>
    <lineage>
        <taxon>Bacteria</taxon>
        <taxon>Bacillati</taxon>
        <taxon>Bacillota</taxon>
        <taxon>Bacilli</taxon>
        <taxon>Lactobacillales</taxon>
        <taxon>Streptococcaceae</taxon>
        <taxon>Streptococcus</taxon>
    </lineage>
</organism>
<gene>
    <name evidence="1" type="primary">fabZ</name>
    <name type="ordered locus">SPG_0390</name>
</gene>
<reference key="1">
    <citation type="journal article" date="2001" name="Microb. Drug Resist.">
        <title>Annotated draft genomic sequence from a Streptococcus pneumoniae type 19F clinical isolate.</title>
        <authorList>
            <person name="Dopazo J."/>
            <person name="Mendoza A."/>
            <person name="Herrero J."/>
            <person name="Caldara F."/>
            <person name="Humbert Y."/>
            <person name="Friedli L."/>
            <person name="Guerrier M."/>
            <person name="Grand-Schenk E."/>
            <person name="Gandin C."/>
            <person name="de Francesco M."/>
            <person name="Polissi A."/>
            <person name="Buell G."/>
            <person name="Feger G."/>
            <person name="Garcia E."/>
            <person name="Peitsch M."/>
            <person name="Garcia-Bustos J.F."/>
        </authorList>
    </citation>
    <scope>NUCLEOTIDE SEQUENCE [LARGE SCALE GENOMIC DNA]</scope>
    <source>
        <strain>G54</strain>
    </source>
</reference>
<reference key="2">
    <citation type="submission" date="2008-03" db="EMBL/GenBank/DDBJ databases">
        <title>Pneumococcal beta glucoside metabolism investigated by whole genome comparison.</title>
        <authorList>
            <person name="Mulas L."/>
            <person name="Trappetti C."/>
            <person name="Hakenbeck R."/>
            <person name="Iannelli F."/>
            <person name="Pozzi G."/>
            <person name="Davidsen T.M."/>
            <person name="Tettelin H."/>
            <person name="Oggioni M."/>
        </authorList>
    </citation>
    <scope>NUCLEOTIDE SEQUENCE [LARGE SCALE GENOMIC DNA]</scope>
    <source>
        <strain>G54</strain>
    </source>
</reference>
<comment type="function">
    <text evidence="1">Involved in unsaturated fatty acids biosynthesis. Catalyzes the dehydration of short chain beta-hydroxyacyl-ACPs and long chain saturated and unsaturated beta-hydroxyacyl-ACPs.</text>
</comment>
<comment type="catalytic activity">
    <reaction evidence="1">
        <text>a (3R)-hydroxyacyl-[ACP] = a (2E)-enoyl-[ACP] + H2O</text>
        <dbReference type="Rhea" id="RHEA:13097"/>
        <dbReference type="Rhea" id="RHEA-COMP:9925"/>
        <dbReference type="Rhea" id="RHEA-COMP:9945"/>
        <dbReference type="ChEBI" id="CHEBI:15377"/>
        <dbReference type="ChEBI" id="CHEBI:78784"/>
        <dbReference type="ChEBI" id="CHEBI:78827"/>
        <dbReference type="EC" id="4.2.1.59"/>
    </reaction>
</comment>
<comment type="subcellular location">
    <subcellularLocation>
        <location evidence="1">Cytoplasm</location>
    </subcellularLocation>
</comment>
<comment type="similarity">
    <text evidence="1">Belongs to the thioester dehydratase family. FabZ subfamily.</text>
</comment>
<proteinExistence type="inferred from homology"/>
<keyword id="KW-0963">Cytoplasm</keyword>
<keyword id="KW-0441">Lipid A biosynthesis</keyword>
<keyword id="KW-0444">Lipid biosynthesis</keyword>
<keyword id="KW-0443">Lipid metabolism</keyword>
<keyword id="KW-0456">Lyase</keyword>
<dbReference type="EC" id="4.2.1.59" evidence="1"/>
<dbReference type="EMBL" id="CP001015">
    <property type="protein sequence ID" value="ACF55734.1"/>
    <property type="molecule type" value="Genomic_DNA"/>
</dbReference>
<dbReference type="SMR" id="B5E1N7"/>
<dbReference type="KEGG" id="spx:SPG_0390"/>
<dbReference type="HOGENOM" id="CLU_078912_3_0_9"/>
<dbReference type="GO" id="GO:0005737">
    <property type="term" value="C:cytoplasm"/>
    <property type="evidence" value="ECO:0007669"/>
    <property type="project" value="UniProtKB-SubCell"/>
</dbReference>
<dbReference type="GO" id="GO:0016020">
    <property type="term" value="C:membrane"/>
    <property type="evidence" value="ECO:0007669"/>
    <property type="project" value="GOC"/>
</dbReference>
<dbReference type="GO" id="GO:0019171">
    <property type="term" value="F:(3R)-hydroxyacyl-[acyl-carrier-protein] dehydratase activity"/>
    <property type="evidence" value="ECO:0007669"/>
    <property type="project" value="UniProtKB-EC"/>
</dbReference>
<dbReference type="GO" id="GO:0006633">
    <property type="term" value="P:fatty acid biosynthetic process"/>
    <property type="evidence" value="ECO:0007669"/>
    <property type="project" value="UniProtKB-UniRule"/>
</dbReference>
<dbReference type="GO" id="GO:0009245">
    <property type="term" value="P:lipid A biosynthetic process"/>
    <property type="evidence" value="ECO:0007669"/>
    <property type="project" value="UniProtKB-UniRule"/>
</dbReference>
<dbReference type="CDD" id="cd01288">
    <property type="entry name" value="FabZ"/>
    <property type="match status" value="1"/>
</dbReference>
<dbReference type="FunFam" id="3.10.129.10:FF:000001">
    <property type="entry name" value="3-hydroxyacyl-[acyl-carrier-protein] dehydratase FabZ"/>
    <property type="match status" value="1"/>
</dbReference>
<dbReference type="Gene3D" id="3.10.129.10">
    <property type="entry name" value="Hotdog Thioesterase"/>
    <property type="match status" value="1"/>
</dbReference>
<dbReference type="HAMAP" id="MF_00406">
    <property type="entry name" value="FabZ"/>
    <property type="match status" value="1"/>
</dbReference>
<dbReference type="InterPro" id="IPR013114">
    <property type="entry name" value="FabA_FabZ"/>
</dbReference>
<dbReference type="InterPro" id="IPR010084">
    <property type="entry name" value="FabZ"/>
</dbReference>
<dbReference type="InterPro" id="IPR029069">
    <property type="entry name" value="HotDog_dom_sf"/>
</dbReference>
<dbReference type="NCBIfam" id="TIGR01750">
    <property type="entry name" value="fabZ"/>
    <property type="match status" value="1"/>
</dbReference>
<dbReference type="NCBIfam" id="NF000582">
    <property type="entry name" value="PRK00006.1"/>
    <property type="match status" value="1"/>
</dbReference>
<dbReference type="PANTHER" id="PTHR30272">
    <property type="entry name" value="3-HYDROXYACYL-[ACYL-CARRIER-PROTEIN] DEHYDRATASE"/>
    <property type="match status" value="1"/>
</dbReference>
<dbReference type="PANTHER" id="PTHR30272:SF1">
    <property type="entry name" value="3-HYDROXYACYL-[ACYL-CARRIER-PROTEIN] DEHYDRATASE"/>
    <property type="match status" value="1"/>
</dbReference>
<dbReference type="Pfam" id="PF07977">
    <property type="entry name" value="FabA"/>
    <property type="match status" value="1"/>
</dbReference>
<dbReference type="SUPFAM" id="SSF54637">
    <property type="entry name" value="Thioesterase/thiol ester dehydrase-isomerase"/>
    <property type="match status" value="1"/>
</dbReference>
<evidence type="ECO:0000255" key="1">
    <source>
        <dbReference type="HAMAP-Rule" id="MF_00406"/>
    </source>
</evidence>
<sequence>MIDIQGIKEALPHRYPMLLVDRVLEVSEDTIVAIKNVTINEPFFNGHFPQYPVMPGVLIMEALAQTAGVLELSKPENKGKLVFYAGMDKVKFKKQVVPGDQLVMTATFVKRRGTIAVVEAKAEVDGKLAASGILTFAIGN</sequence>
<protein>
    <recommendedName>
        <fullName evidence="1">3-hydroxyacyl-[acyl-carrier-protein] dehydratase FabZ</fullName>
        <ecNumber evidence="1">4.2.1.59</ecNumber>
    </recommendedName>
    <alternativeName>
        <fullName evidence="1">(3R)-hydroxymyristoyl-[acyl-carrier-protein] dehydratase</fullName>
        <shortName evidence="1">(3R)-hydroxymyristoyl-ACP dehydrase</shortName>
    </alternativeName>
    <alternativeName>
        <fullName evidence="1">Beta-hydroxyacyl-ACP dehydratase</fullName>
    </alternativeName>
</protein>
<name>FABZ_STRP4</name>